<sequence>MNDQWYKHLIGARTIKTGIAIFLTAVFCMALDLTPIYAILTAVVTIEPTAKASLIKGYRRLPATVIGAGFAVLFTYLFGDQSPFTYALSATFTILFCTKLKLQVGTNVAVLTSLAMIPGIHDAYIFNFLSRTLTAIIGLVTSGLINFMVFPPKYYGQVEEKLSKTDALMYKLFYNRCQELILSRLQSDKSEKAYKNIFNLNNQVETLISYQRDELSYHKKKECDWKLLNQLTKRAYTNRLFITHLSNIIYLPKNTRVNFSGDEKMALLKISSSIKDIFYDGSFKREDDSVETLRSTIKALEISGENQIKSHILYEVLMIYRLLDSRYA</sequence>
<accession>Q8NVT9</accession>
<feature type="chain" id="PRO_0000283022" description="UPF0421 protein MW1829">
    <location>
        <begin position="1"/>
        <end position="328"/>
    </location>
</feature>
<feature type="transmembrane region" description="Helical" evidence="1">
    <location>
        <begin position="19"/>
        <end position="39"/>
    </location>
</feature>
<feature type="transmembrane region" description="Helical" evidence="1">
    <location>
        <begin position="61"/>
        <end position="81"/>
    </location>
</feature>
<feature type="transmembrane region" description="Helical" evidence="1">
    <location>
        <begin position="108"/>
        <end position="128"/>
    </location>
</feature>
<feature type="transmembrane region" description="Helical" evidence="1">
    <location>
        <begin position="132"/>
        <end position="152"/>
    </location>
</feature>
<name>Y1829_STAAW</name>
<reference key="1">
    <citation type="journal article" date="2002" name="Lancet">
        <title>Genome and virulence determinants of high virulence community-acquired MRSA.</title>
        <authorList>
            <person name="Baba T."/>
            <person name="Takeuchi F."/>
            <person name="Kuroda M."/>
            <person name="Yuzawa H."/>
            <person name="Aoki K."/>
            <person name="Oguchi A."/>
            <person name="Nagai Y."/>
            <person name="Iwama N."/>
            <person name="Asano K."/>
            <person name="Naimi T."/>
            <person name="Kuroda H."/>
            <person name="Cui L."/>
            <person name="Yamamoto K."/>
            <person name="Hiramatsu K."/>
        </authorList>
    </citation>
    <scope>NUCLEOTIDE SEQUENCE [LARGE SCALE GENOMIC DNA]</scope>
    <source>
        <strain>MW2</strain>
    </source>
</reference>
<dbReference type="EMBL" id="BA000033">
    <property type="protein sequence ID" value="BAB95694.1"/>
    <property type="molecule type" value="Genomic_DNA"/>
</dbReference>
<dbReference type="RefSeq" id="WP_000999713.1">
    <property type="nucleotide sequence ID" value="NC_003923.1"/>
</dbReference>
<dbReference type="SMR" id="Q8NVT9"/>
<dbReference type="KEGG" id="sam:MW1829"/>
<dbReference type="HOGENOM" id="CLU_067028_0_0_9"/>
<dbReference type="GO" id="GO:0005886">
    <property type="term" value="C:plasma membrane"/>
    <property type="evidence" value="ECO:0007669"/>
    <property type="project" value="UniProtKB-SubCell"/>
</dbReference>
<dbReference type="InterPro" id="IPR010343">
    <property type="entry name" value="ArAE_1"/>
</dbReference>
<dbReference type="PANTHER" id="PTHR31086">
    <property type="entry name" value="ALUMINUM-ACTIVATED MALATE TRANSPORTER 10"/>
    <property type="match status" value="1"/>
</dbReference>
<dbReference type="Pfam" id="PF06081">
    <property type="entry name" value="ArAE_1"/>
    <property type="match status" value="1"/>
</dbReference>
<gene>
    <name type="ordered locus">MW1829</name>
</gene>
<comment type="subcellular location">
    <subcellularLocation>
        <location evidence="2">Cell membrane</location>
        <topology evidence="2">Multi-pass membrane protein</topology>
    </subcellularLocation>
</comment>
<comment type="similarity">
    <text evidence="2">Belongs to the UPF0421 family.</text>
</comment>
<keyword id="KW-1003">Cell membrane</keyword>
<keyword id="KW-0472">Membrane</keyword>
<keyword id="KW-0812">Transmembrane</keyword>
<keyword id="KW-1133">Transmembrane helix</keyword>
<proteinExistence type="inferred from homology"/>
<protein>
    <recommendedName>
        <fullName>UPF0421 protein MW1829</fullName>
    </recommendedName>
</protein>
<evidence type="ECO:0000255" key="1"/>
<evidence type="ECO:0000305" key="2"/>
<organism>
    <name type="scientific">Staphylococcus aureus (strain MW2)</name>
    <dbReference type="NCBI Taxonomy" id="196620"/>
    <lineage>
        <taxon>Bacteria</taxon>
        <taxon>Bacillati</taxon>
        <taxon>Bacillota</taxon>
        <taxon>Bacilli</taxon>
        <taxon>Bacillales</taxon>
        <taxon>Staphylococcaceae</taxon>
        <taxon>Staphylococcus</taxon>
    </lineage>
</organism>